<name>FAKD2_HUMAN</name>
<sequence>MLTTLKPFGSVSVESKMNNKAGSFFWNLRQFSTLVSTSRTMRLCCLGLCKPKIVHSNWNILNNFHNRMQSTDIIRYLFQDAFIFKSDVGFQTKGISTLTALRIERLLYAKRLFFDSKQSLVPVDKSDDELKKVNLNHEVSNEDVLTKETKPNRISSRKLSEECNSLSDVLDAFSKAPTFPSSNYFTAMWTIAKRLSDDQKRFEKRLMFSHPAFNQLCEHMMREAKIMQYKYLLFSLHAIVKLGIPQNTILVQTLLRVTQERINECDEICLSVLSTVLEAMEPCKNVHVLRTGFRILVDQQVWKIEDVFTLQVVMKCIGKDAPIALKRKLEMKALRELDRFSVLNSQHMFEVLAAMNHRSLILLDECSKVVLDNIHGCPLRIMINILQSCKDLQYHNLDLFKGLADYVAATFDIWKFRKVLFILILFENLGFRPVGLMDLFMKRIVEDPESLNMKNILSILHTYSSLNHVYKCQNKEQFVEVMASALTGYLHTISSENLLDAVYSFCLMNYFPLAPFNQLLQKDIISELLTSDDMKNAYKLHTLDTCLKLDDTVYLRDIALSLPQLPRELPSSHTNAKVAEVLSSLLGGEGHFSKDVHLPHNYHIDFEIRMDTNRNQVLPLSDVDTTSATDIQRVAVLCVSRSAYCLGSSHPRGFLAMKMRHLNAMGFHVILVNNWEMDKLEMEDAVTFLKTKIYSVEALPVAAVNVQSTQ</sequence>
<dbReference type="EMBL" id="AB023188">
    <property type="protein sequence ID" value="BAA76815.2"/>
    <property type="status" value="ALT_INIT"/>
    <property type="molecule type" value="mRNA"/>
</dbReference>
<dbReference type="EMBL" id="AF223470">
    <property type="protein sequence ID" value="AAF64145.1"/>
    <property type="molecule type" value="mRNA"/>
</dbReference>
<dbReference type="EMBL" id="AL833877">
    <property type="protein sequence ID" value="CAD38734.1"/>
    <property type="molecule type" value="mRNA"/>
</dbReference>
<dbReference type="EMBL" id="AC008269">
    <property type="protein sequence ID" value="AAX93275.1"/>
    <property type="molecule type" value="Genomic_DNA"/>
</dbReference>
<dbReference type="EMBL" id="BC001544">
    <property type="protein sequence ID" value="AAH01544.1"/>
    <property type="molecule type" value="mRNA"/>
</dbReference>
<dbReference type="EMBL" id="AK001315">
    <property type="protein sequence ID" value="BAA91617.1"/>
    <property type="status" value="ALT_INIT"/>
    <property type="molecule type" value="mRNA"/>
</dbReference>
<dbReference type="CCDS" id="CCDS2371.1">
    <molecule id="Q9NYY8-1"/>
</dbReference>
<dbReference type="RefSeq" id="NP_001129665.1">
    <molecule id="Q9NYY8-1"/>
    <property type="nucleotide sequence ID" value="NM_001136193.2"/>
</dbReference>
<dbReference type="RefSeq" id="NP_001129666.1">
    <molecule id="Q9NYY8-1"/>
    <property type="nucleotide sequence ID" value="NM_001136194.2"/>
</dbReference>
<dbReference type="RefSeq" id="NP_055744.2">
    <molecule id="Q9NYY8-1"/>
    <property type="nucleotide sequence ID" value="NM_014929.3"/>
</dbReference>
<dbReference type="SMR" id="Q9NYY8"/>
<dbReference type="BioGRID" id="116535">
    <property type="interactions" value="291"/>
</dbReference>
<dbReference type="CORUM" id="Q9NYY8"/>
<dbReference type="FunCoup" id="Q9NYY8">
    <property type="interactions" value="1706"/>
</dbReference>
<dbReference type="IntAct" id="Q9NYY8">
    <property type="interactions" value="318"/>
</dbReference>
<dbReference type="MINT" id="Q9NYY8"/>
<dbReference type="STRING" id="9606.ENSP00000385990"/>
<dbReference type="iPTMnet" id="Q9NYY8"/>
<dbReference type="MetOSite" id="Q9NYY8"/>
<dbReference type="PhosphoSitePlus" id="Q9NYY8"/>
<dbReference type="SwissPalm" id="Q9NYY8"/>
<dbReference type="BioMuta" id="FASTKD2"/>
<dbReference type="DMDM" id="74734717"/>
<dbReference type="jPOST" id="Q9NYY8"/>
<dbReference type="MassIVE" id="Q9NYY8"/>
<dbReference type="PaxDb" id="9606-ENSP00000236980"/>
<dbReference type="PeptideAtlas" id="Q9NYY8"/>
<dbReference type="ProteomicsDB" id="83300">
    <molecule id="Q9NYY8-1"/>
</dbReference>
<dbReference type="ProteomicsDB" id="83301">
    <molecule id="Q9NYY8-2"/>
</dbReference>
<dbReference type="Pumba" id="Q9NYY8"/>
<dbReference type="Antibodypedia" id="34183">
    <property type="antibodies" value="231 antibodies from 25 providers"/>
</dbReference>
<dbReference type="DNASU" id="22868"/>
<dbReference type="Ensembl" id="ENST00000236980.10">
    <molecule id="Q9NYY8-1"/>
    <property type="protein sequence ID" value="ENSP00000236980.6"/>
    <property type="gene ID" value="ENSG00000118246.14"/>
</dbReference>
<dbReference type="Ensembl" id="ENST00000402774.8">
    <molecule id="Q9NYY8-1"/>
    <property type="protein sequence ID" value="ENSP00000385990.3"/>
    <property type="gene ID" value="ENSG00000118246.14"/>
</dbReference>
<dbReference type="Ensembl" id="ENST00000403094.3">
    <molecule id="Q9NYY8-1"/>
    <property type="protein sequence ID" value="ENSP00000384929.3"/>
    <property type="gene ID" value="ENSG00000118246.14"/>
</dbReference>
<dbReference type="GeneID" id="22868"/>
<dbReference type="KEGG" id="hsa:22868"/>
<dbReference type="MANE-Select" id="ENST00000402774.8">
    <property type="protein sequence ID" value="ENSP00000385990.3"/>
    <property type="RefSeq nucleotide sequence ID" value="NM_001136193.2"/>
    <property type="RefSeq protein sequence ID" value="NP_001129665.1"/>
</dbReference>
<dbReference type="UCSC" id="uc002vbu.4">
    <molecule id="Q9NYY8-1"/>
    <property type="organism name" value="human"/>
</dbReference>
<dbReference type="AGR" id="HGNC:29160"/>
<dbReference type="CTD" id="22868"/>
<dbReference type="DisGeNET" id="22868"/>
<dbReference type="GeneCards" id="FASTKD2"/>
<dbReference type="HGNC" id="HGNC:29160">
    <property type="gene designation" value="FASTKD2"/>
</dbReference>
<dbReference type="HPA" id="ENSG00000118246">
    <property type="expression patterns" value="Low tissue specificity"/>
</dbReference>
<dbReference type="MalaCards" id="FASTKD2"/>
<dbReference type="MIM" id="612322">
    <property type="type" value="gene"/>
</dbReference>
<dbReference type="MIM" id="618855">
    <property type="type" value="phenotype"/>
</dbReference>
<dbReference type="neXtProt" id="NX_Q9NYY8"/>
<dbReference type="OpenTargets" id="ENSG00000118246"/>
<dbReference type="Orphanet" id="166105">
    <property type="disease" value="FASTKD2-related infantile mitochondrial encephalomyopathy"/>
</dbReference>
<dbReference type="PharmGKB" id="PA134974924"/>
<dbReference type="VEuPathDB" id="HostDB:ENSG00000118246"/>
<dbReference type="eggNOG" id="ENOG502QVSD">
    <property type="taxonomic scope" value="Eukaryota"/>
</dbReference>
<dbReference type="GeneTree" id="ENSGT01030000234607"/>
<dbReference type="HOGENOM" id="CLU_025270_0_0_1"/>
<dbReference type="InParanoid" id="Q9NYY8"/>
<dbReference type="OMA" id="FEIRMDS"/>
<dbReference type="OrthoDB" id="9369505at2759"/>
<dbReference type="PAN-GO" id="Q9NYY8">
    <property type="GO annotations" value="5 GO annotations based on evolutionary models"/>
</dbReference>
<dbReference type="PhylomeDB" id="Q9NYY8"/>
<dbReference type="TreeFam" id="TF352875"/>
<dbReference type="PathwayCommons" id="Q9NYY8"/>
<dbReference type="Reactome" id="R-HSA-9837092">
    <property type="pathway name" value="FASTK family proteins regulate processing and stability of mitochondrial RNAs"/>
</dbReference>
<dbReference type="SignaLink" id="Q9NYY8"/>
<dbReference type="SIGNOR" id="Q9NYY8"/>
<dbReference type="BioGRID-ORCS" id="22868">
    <property type="hits" value="20 hits in 1162 CRISPR screens"/>
</dbReference>
<dbReference type="CD-CODE" id="5965E019">
    <property type="entry name" value="mtRNA granule"/>
</dbReference>
<dbReference type="ChiTaRS" id="FASTKD2">
    <property type="organism name" value="human"/>
</dbReference>
<dbReference type="GenomeRNAi" id="22868"/>
<dbReference type="Pharos" id="Q9NYY8">
    <property type="development level" value="Tbio"/>
</dbReference>
<dbReference type="PRO" id="PR:Q9NYY8"/>
<dbReference type="Proteomes" id="UP000005640">
    <property type="component" value="Chromosome 2"/>
</dbReference>
<dbReference type="RNAct" id="Q9NYY8">
    <property type="molecule type" value="protein"/>
</dbReference>
<dbReference type="Bgee" id="ENSG00000118246">
    <property type="expression patterns" value="Expressed in adrenal tissue and 188 other cell types or tissues"/>
</dbReference>
<dbReference type="ExpressionAtlas" id="Q9NYY8">
    <property type="expression patterns" value="baseline and differential"/>
</dbReference>
<dbReference type="GO" id="GO:0005759">
    <property type="term" value="C:mitochondrial matrix"/>
    <property type="evidence" value="ECO:0000314"/>
    <property type="project" value="FlyBase"/>
</dbReference>
<dbReference type="GO" id="GO:0042645">
    <property type="term" value="C:mitochondrial nucleoid"/>
    <property type="evidence" value="ECO:0000314"/>
    <property type="project" value="UniProtKB"/>
</dbReference>
<dbReference type="GO" id="GO:0005739">
    <property type="term" value="C:mitochondrion"/>
    <property type="evidence" value="ECO:0000314"/>
    <property type="project" value="HPA"/>
</dbReference>
<dbReference type="GO" id="GO:0035770">
    <property type="term" value="C:ribonucleoprotein granule"/>
    <property type="evidence" value="ECO:0000314"/>
    <property type="project" value="UniProtKB"/>
</dbReference>
<dbReference type="GO" id="GO:0003723">
    <property type="term" value="F:RNA binding"/>
    <property type="evidence" value="ECO:0007005"/>
    <property type="project" value="UniProtKB"/>
</dbReference>
<dbReference type="GO" id="GO:0019843">
    <property type="term" value="F:rRNA binding"/>
    <property type="evidence" value="ECO:0000314"/>
    <property type="project" value="UniProtKB"/>
</dbReference>
<dbReference type="GO" id="GO:0006915">
    <property type="term" value="P:apoptotic process"/>
    <property type="evidence" value="ECO:0000315"/>
    <property type="project" value="UniProtKB"/>
</dbReference>
<dbReference type="GO" id="GO:1902775">
    <property type="term" value="P:mitochondrial large ribosomal subunit assembly"/>
    <property type="evidence" value="ECO:0000315"/>
    <property type="project" value="UniProtKB"/>
</dbReference>
<dbReference type="GO" id="GO:0000963">
    <property type="term" value="P:mitochondrial RNA processing"/>
    <property type="evidence" value="ECO:0000318"/>
    <property type="project" value="GO_Central"/>
</dbReference>
<dbReference type="GO" id="GO:0032543">
    <property type="term" value="P:mitochondrial translation"/>
    <property type="evidence" value="ECO:0000314"/>
    <property type="project" value="UniProtKB"/>
</dbReference>
<dbReference type="GO" id="GO:0070131">
    <property type="term" value="P:positive regulation of mitochondrial translation"/>
    <property type="evidence" value="ECO:0000315"/>
    <property type="project" value="UniProtKB"/>
</dbReference>
<dbReference type="GO" id="GO:0044528">
    <property type="term" value="P:regulation of mitochondrial mRNA stability"/>
    <property type="evidence" value="ECO:0000318"/>
    <property type="project" value="GO_Central"/>
</dbReference>
<dbReference type="GO" id="GO:0006396">
    <property type="term" value="P:RNA processing"/>
    <property type="evidence" value="ECO:0000314"/>
    <property type="project" value="UniProtKB"/>
</dbReference>
<dbReference type="InterPro" id="IPR013579">
    <property type="entry name" value="FAST_2"/>
</dbReference>
<dbReference type="InterPro" id="IPR050870">
    <property type="entry name" value="FAST_kinase"/>
</dbReference>
<dbReference type="InterPro" id="IPR010622">
    <property type="entry name" value="FAST_Leu-rich"/>
</dbReference>
<dbReference type="InterPro" id="IPR013584">
    <property type="entry name" value="RAP"/>
</dbReference>
<dbReference type="PANTHER" id="PTHR21228:SF1">
    <property type="entry name" value="FAST KINASE DOMAIN-CONTAINING PROTEIN 2, MITOCHONDRIAL"/>
    <property type="match status" value="1"/>
</dbReference>
<dbReference type="PANTHER" id="PTHR21228">
    <property type="entry name" value="FAST LEU-RICH DOMAIN-CONTAINING"/>
    <property type="match status" value="1"/>
</dbReference>
<dbReference type="Pfam" id="PF06743">
    <property type="entry name" value="FAST_1"/>
    <property type="match status" value="1"/>
</dbReference>
<dbReference type="Pfam" id="PF08368">
    <property type="entry name" value="FAST_2"/>
    <property type="match status" value="1"/>
</dbReference>
<dbReference type="Pfam" id="PF08373">
    <property type="entry name" value="RAP"/>
    <property type="match status" value="1"/>
</dbReference>
<dbReference type="SMART" id="SM00952">
    <property type="entry name" value="RAP"/>
    <property type="match status" value="1"/>
</dbReference>
<dbReference type="PROSITE" id="PS51286">
    <property type="entry name" value="RAP"/>
    <property type="match status" value="1"/>
</dbReference>
<protein>
    <recommendedName>
        <fullName>FAST kinase domain-containing protein 2, mitochondrial</fullName>
    </recommendedName>
</protein>
<reference key="1">
    <citation type="journal article" date="1999" name="DNA Res.">
        <title>Prediction of the coding sequences of unidentified human genes. XIII. The complete sequences of 100 new cDNA clones from brain which code for large proteins in vitro.</title>
        <authorList>
            <person name="Nagase T."/>
            <person name="Ishikawa K."/>
            <person name="Suyama M."/>
            <person name="Kikuno R."/>
            <person name="Hirosawa M."/>
            <person name="Miyajima N."/>
            <person name="Tanaka A."/>
            <person name="Kotani H."/>
            <person name="Nomura N."/>
            <person name="Ohara O."/>
        </authorList>
    </citation>
    <scope>NUCLEOTIDE SEQUENCE [LARGE SCALE MRNA] (ISOFORM 2)</scope>
    <source>
        <tissue>Brain</tissue>
    </source>
</reference>
<reference key="2">
    <citation type="journal article" date="2000" name="Proc. Natl. Acad. Sci. U.S.A.">
        <title>Gene expression profiling in the human hypothalamus-pituitary-adrenal axis and full-length cDNA cloning.</title>
        <authorList>
            <person name="Hu R.-M."/>
            <person name="Han Z.-G."/>
            <person name="Song H.-D."/>
            <person name="Peng Y.-D."/>
            <person name="Huang Q.-H."/>
            <person name="Ren S.-X."/>
            <person name="Gu Y.-J."/>
            <person name="Huang C.-H."/>
            <person name="Li Y.-B."/>
            <person name="Jiang C.-L."/>
            <person name="Fu G."/>
            <person name="Zhang Q.-H."/>
            <person name="Gu B.-W."/>
            <person name="Dai M."/>
            <person name="Mao Y.-F."/>
            <person name="Gao G.-F."/>
            <person name="Rong R."/>
            <person name="Ye M."/>
            <person name="Zhou J."/>
            <person name="Xu S.-H."/>
            <person name="Gu J."/>
            <person name="Shi J.-X."/>
            <person name="Jin W.-R."/>
            <person name="Zhang C.-K."/>
            <person name="Wu T.-M."/>
            <person name="Huang G.-Y."/>
            <person name="Chen Z."/>
            <person name="Chen M.-D."/>
            <person name="Chen J.-L."/>
        </authorList>
    </citation>
    <scope>NUCLEOTIDE SEQUENCE [LARGE SCALE MRNA] (ISOFORM 1)</scope>
    <source>
        <tissue>Adrenal gland</tissue>
    </source>
</reference>
<reference key="3">
    <citation type="journal article" date="2007" name="BMC Genomics">
        <title>The full-ORF clone resource of the German cDNA consortium.</title>
        <authorList>
            <person name="Bechtel S."/>
            <person name="Rosenfelder H."/>
            <person name="Duda A."/>
            <person name="Schmidt C.P."/>
            <person name="Ernst U."/>
            <person name="Wellenreuther R."/>
            <person name="Mehrle A."/>
            <person name="Schuster C."/>
            <person name="Bahr A."/>
            <person name="Bloecker H."/>
            <person name="Heubner D."/>
            <person name="Hoerlein A."/>
            <person name="Michel G."/>
            <person name="Wedler H."/>
            <person name="Koehrer K."/>
            <person name="Ottenwaelder B."/>
            <person name="Poustka A."/>
            <person name="Wiemann S."/>
            <person name="Schupp I."/>
        </authorList>
    </citation>
    <scope>NUCLEOTIDE SEQUENCE [LARGE SCALE MRNA] (ISOFORM 1)</scope>
    <source>
        <tissue>Melanoma</tissue>
    </source>
</reference>
<reference key="4">
    <citation type="journal article" date="2005" name="Nature">
        <title>Generation and annotation of the DNA sequences of human chromosomes 2 and 4.</title>
        <authorList>
            <person name="Hillier L.W."/>
            <person name="Graves T.A."/>
            <person name="Fulton R.S."/>
            <person name="Fulton L.A."/>
            <person name="Pepin K.H."/>
            <person name="Minx P."/>
            <person name="Wagner-McPherson C."/>
            <person name="Layman D."/>
            <person name="Wylie K."/>
            <person name="Sekhon M."/>
            <person name="Becker M.C."/>
            <person name="Fewell G.A."/>
            <person name="Delehaunty K.D."/>
            <person name="Miner T.L."/>
            <person name="Nash W.E."/>
            <person name="Kremitzki C."/>
            <person name="Oddy L."/>
            <person name="Du H."/>
            <person name="Sun H."/>
            <person name="Bradshaw-Cordum H."/>
            <person name="Ali J."/>
            <person name="Carter J."/>
            <person name="Cordes M."/>
            <person name="Harris A."/>
            <person name="Isak A."/>
            <person name="van Brunt A."/>
            <person name="Nguyen C."/>
            <person name="Du F."/>
            <person name="Courtney L."/>
            <person name="Kalicki J."/>
            <person name="Ozersky P."/>
            <person name="Abbott S."/>
            <person name="Armstrong J."/>
            <person name="Belter E.A."/>
            <person name="Caruso L."/>
            <person name="Cedroni M."/>
            <person name="Cotton M."/>
            <person name="Davidson T."/>
            <person name="Desai A."/>
            <person name="Elliott G."/>
            <person name="Erb T."/>
            <person name="Fronick C."/>
            <person name="Gaige T."/>
            <person name="Haakenson W."/>
            <person name="Haglund K."/>
            <person name="Holmes A."/>
            <person name="Harkins R."/>
            <person name="Kim K."/>
            <person name="Kruchowski S.S."/>
            <person name="Strong C.M."/>
            <person name="Grewal N."/>
            <person name="Goyea E."/>
            <person name="Hou S."/>
            <person name="Levy A."/>
            <person name="Martinka S."/>
            <person name="Mead K."/>
            <person name="McLellan M.D."/>
            <person name="Meyer R."/>
            <person name="Randall-Maher J."/>
            <person name="Tomlinson C."/>
            <person name="Dauphin-Kohlberg S."/>
            <person name="Kozlowicz-Reilly A."/>
            <person name="Shah N."/>
            <person name="Swearengen-Shahid S."/>
            <person name="Snider J."/>
            <person name="Strong J.T."/>
            <person name="Thompson J."/>
            <person name="Yoakum M."/>
            <person name="Leonard S."/>
            <person name="Pearman C."/>
            <person name="Trani L."/>
            <person name="Radionenko M."/>
            <person name="Waligorski J.E."/>
            <person name="Wang C."/>
            <person name="Rock S.M."/>
            <person name="Tin-Wollam A.-M."/>
            <person name="Maupin R."/>
            <person name="Latreille P."/>
            <person name="Wendl M.C."/>
            <person name="Yang S.-P."/>
            <person name="Pohl C."/>
            <person name="Wallis J.W."/>
            <person name="Spieth J."/>
            <person name="Bieri T.A."/>
            <person name="Berkowicz N."/>
            <person name="Nelson J.O."/>
            <person name="Osborne J."/>
            <person name="Ding L."/>
            <person name="Meyer R."/>
            <person name="Sabo A."/>
            <person name="Shotland Y."/>
            <person name="Sinha P."/>
            <person name="Wohldmann P.E."/>
            <person name="Cook L.L."/>
            <person name="Hickenbotham M.T."/>
            <person name="Eldred J."/>
            <person name="Williams D."/>
            <person name="Jones T.A."/>
            <person name="She X."/>
            <person name="Ciccarelli F.D."/>
            <person name="Izaurralde E."/>
            <person name="Taylor J."/>
            <person name="Schmutz J."/>
            <person name="Myers R.M."/>
            <person name="Cox D.R."/>
            <person name="Huang X."/>
            <person name="McPherson J.D."/>
            <person name="Mardis E.R."/>
            <person name="Clifton S.W."/>
            <person name="Warren W.C."/>
            <person name="Chinwalla A.T."/>
            <person name="Eddy S.R."/>
            <person name="Marra M.A."/>
            <person name="Ovcharenko I."/>
            <person name="Furey T.S."/>
            <person name="Miller W."/>
            <person name="Eichler E.E."/>
            <person name="Bork P."/>
            <person name="Suyama M."/>
            <person name="Torrents D."/>
            <person name="Waterston R.H."/>
            <person name="Wilson R.K."/>
        </authorList>
    </citation>
    <scope>NUCLEOTIDE SEQUENCE [LARGE SCALE GENOMIC DNA]</scope>
</reference>
<reference key="5">
    <citation type="journal article" date="2004" name="Genome Res.">
        <title>The status, quality, and expansion of the NIH full-length cDNA project: the Mammalian Gene Collection (MGC).</title>
        <authorList>
            <consortium name="The MGC Project Team"/>
        </authorList>
    </citation>
    <scope>NUCLEOTIDE SEQUENCE [LARGE SCALE MRNA] (ISOFORM 1)</scope>
    <source>
        <tissue>Placenta</tissue>
    </source>
</reference>
<reference key="6">
    <citation type="journal article" date="2004" name="Nat. Genet.">
        <title>Complete sequencing and characterization of 21,243 full-length human cDNAs.</title>
        <authorList>
            <person name="Ota T."/>
            <person name="Suzuki Y."/>
            <person name="Nishikawa T."/>
            <person name="Otsuki T."/>
            <person name="Sugiyama T."/>
            <person name="Irie R."/>
            <person name="Wakamatsu A."/>
            <person name="Hayashi K."/>
            <person name="Sato H."/>
            <person name="Nagai K."/>
            <person name="Kimura K."/>
            <person name="Makita H."/>
            <person name="Sekine M."/>
            <person name="Obayashi M."/>
            <person name="Nishi T."/>
            <person name="Shibahara T."/>
            <person name="Tanaka T."/>
            <person name="Ishii S."/>
            <person name="Yamamoto J."/>
            <person name="Saito K."/>
            <person name="Kawai Y."/>
            <person name="Isono Y."/>
            <person name="Nakamura Y."/>
            <person name="Nagahari K."/>
            <person name="Murakami K."/>
            <person name="Yasuda T."/>
            <person name="Iwayanagi T."/>
            <person name="Wagatsuma M."/>
            <person name="Shiratori A."/>
            <person name="Sudo H."/>
            <person name="Hosoiri T."/>
            <person name="Kaku Y."/>
            <person name="Kodaira H."/>
            <person name="Kondo H."/>
            <person name="Sugawara M."/>
            <person name="Takahashi M."/>
            <person name="Kanda K."/>
            <person name="Yokoi T."/>
            <person name="Furuya T."/>
            <person name="Kikkawa E."/>
            <person name="Omura Y."/>
            <person name="Abe K."/>
            <person name="Kamihara K."/>
            <person name="Katsuta N."/>
            <person name="Sato K."/>
            <person name="Tanikawa M."/>
            <person name="Yamazaki M."/>
            <person name="Ninomiya K."/>
            <person name="Ishibashi T."/>
            <person name="Yamashita H."/>
            <person name="Murakawa K."/>
            <person name="Fujimori K."/>
            <person name="Tanai H."/>
            <person name="Kimata M."/>
            <person name="Watanabe M."/>
            <person name="Hiraoka S."/>
            <person name="Chiba Y."/>
            <person name="Ishida S."/>
            <person name="Ono Y."/>
            <person name="Takiguchi S."/>
            <person name="Watanabe S."/>
            <person name="Yosida M."/>
            <person name="Hotuta T."/>
            <person name="Kusano J."/>
            <person name="Kanehori K."/>
            <person name="Takahashi-Fujii A."/>
            <person name="Hara H."/>
            <person name="Tanase T.-O."/>
            <person name="Nomura Y."/>
            <person name="Togiya S."/>
            <person name="Komai F."/>
            <person name="Hara R."/>
            <person name="Takeuchi K."/>
            <person name="Arita M."/>
            <person name="Imose N."/>
            <person name="Musashino K."/>
            <person name="Yuuki H."/>
            <person name="Oshima A."/>
            <person name="Sasaki N."/>
            <person name="Aotsuka S."/>
            <person name="Yoshikawa Y."/>
            <person name="Matsunawa H."/>
            <person name="Ichihara T."/>
            <person name="Shiohata N."/>
            <person name="Sano S."/>
            <person name="Moriya S."/>
            <person name="Momiyama H."/>
            <person name="Satoh N."/>
            <person name="Takami S."/>
            <person name="Terashima Y."/>
            <person name="Suzuki O."/>
            <person name="Nakagawa S."/>
            <person name="Senoh A."/>
            <person name="Mizoguchi H."/>
            <person name="Goto Y."/>
            <person name="Shimizu F."/>
            <person name="Wakebe H."/>
            <person name="Hishigaki H."/>
            <person name="Watanabe T."/>
            <person name="Sugiyama A."/>
            <person name="Takemoto M."/>
            <person name="Kawakami B."/>
            <person name="Yamazaki M."/>
            <person name="Watanabe K."/>
            <person name="Kumagai A."/>
            <person name="Itakura S."/>
            <person name="Fukuzumi Y."/>
            <person name="Fujimori Y."/>
            <person name="Komiyama M."/>
            <person name="Tashiro H."/>
            <person name="Tanigami A."/>
            <person name="Fujiwara T."/>
            <person name="Ono T."/>
            <person name="Yamada K."/>
            <person name="Fujii Y."/>
            <person name="Ozaki K."/>
            <person name="Hirao M."/>
            <person name="Ohmori Y."/>
            <person name="Kawabata A."/>
            <person name="Hikiji T."/>
            <person name="Kobatake N."/>
            <person name="Inagaki H."/>
            <person name="Ikema Y."/>
            <person name="Okamoto S."/>
            <person name="Okitani R."/>
            <person name="Kawakami T."/>
            <person name="Noguchi S."/>
            <person name="Itoh T."/>
            <person name="Shigeta K."/>
            <person name="Senba T."/>
            <person name="Matsumura K."/>
            <person name="Nakajima Y."/>
            <person name="Mizuno T."/>
            <person name="Morinaga M."/>
            <person name="Sasaki M."/>
            <person name="Togashi T."/>
            <person name="Oyama M."/>
            <person name="Hata H."/>
            <person name="Watanabe M."/>
            <person name="Komatsu T."/>
            <person name="Mizushima-Sugano J."/>
            <person name="Satoh T."/>
            <person name="Shirai Y."/>
            <person name="Takahashi Y."/>
            <person name="Nakagawa K."/>
            <person name="Okumura K."/>
            <person name="Nagase T."/>
            <person name="Nomura N."/>
            <person name="Kikuchi H."/>
            <person name="Masuho Y."/>
            <person name="Yamashita R."/>
            <person name="Nakai K."/>
            <person name="Yada T."/>
            <person name="Nakamura Y."/>
            <person name="Ohara O."/>
            <person name="Isogai T."/>
            <person name="Sugano S."/>
        </authorList>
    </citation>
    <scope>NUCLEOTIDE SEQUENCE [LARGE SCALE MRNA] OF 442-710 (ISOFORM 1)</scope>
    <source>
        <tissue>Teratocarcinoma</tissue>
    </source>
</reference>
<reference key="7">
    <citation type="journal article" date="2008" name="Am. J. Hum. Genet.">
        <title>FASTKD2 nonsense mutation in an infantile mitochondrial encephalomyopathy associated with cytochrome c oxidase deficiency.</title>
        <authorList>
            <person name="Ghezzi D."/>
            <person name="Saada A."/>
            <person name="D'Adamo P."/>
            <person name="Fernandez-Vizarra E."/>
            <person name="Gasparini P."/>
            <person name="Tiranti V."/>
            <person name="Elpeleg O."/>
            <person name="Zeviani M."/>
        </authorList>
    </citation>
    <scope>FUNCTION</scope>
    <scope>SUBCELLULAR LOCATION</scope>
    <scope>INVOLVEMENT IN COXPD44</scope>
    <scope>VARIANT COXPD44 432-ARG--GLN-710 DEL</scope>
</reference>
<reference key="8">
    <citation type="journal article" date="2008" name="Proc. Natl. Acad. Sci. U.S.A.">
        <title>A quantitative atlas of mitotic phosphorylation.</title>
        <authorList>
            <person name="Dephoure N."/>
            <person name="Zhou C."/>
            <person name="Villen J."/>
            <person name="Beausoleil S.A."/>
            <person name="Bakalarski C.E."/>
            <person name="Elledge S.J."/>
            <person name="Gygi S.P."/>
        </authorList>
    </citation>
    <scope>IDENTIFICATION BY MASS SPECTROMETRY [LARGE SCALE ANALYSIS]</scope>
    <source>
        <tissue>Cervix carcinoma</tissue>
    </source>
</reference>
<reference key="9">
    <citation type="journal article" date="2010" name="Biochem. Biophys. Res. Commun.">
        <title>Fast kinase domain-containing protein 3 is a mitochondrial protein essential for cellular respiration.</title>
        <authorList>
            <person name="Simarro M."/>
            <person name="Gimenez-Cassina A."/>
            <person name="Kedersha N."/>
            <person name="Lazaro J.B."/>
            <person name="Adelmant G.O."/>
            <person name="Marto J.A."/>
            <person name="Rhee K."/>
            <person name="Tisdale S."/>
            <person name="Danial N."/>
            <person name="Benarafa C."/>
            <person name="Orduna A."/>
            <person name="Anderson P."/>
        </authorList>
    </citation>
    <scope>SUBCELLULAR LOCATION</scope>
    <scope>TISSUE SPECIFICITY</scope>
</reference>
<reference key="10">
    <citation type="journal article" date="2011" name="BMC Syst. Biol.">
        <title>Initial characterization of the human central proteome.</title>
        <authorList>
            <person name="Burkard T.R."/>
            <person name="Planyavsky M."/>
            <person name="Kaupe I."/>
            <person name="Breitwieser F.P."/>
            <person name="Buerckstuemmer T."/>
            <person name="Bennett K.L."/>
            <person name="Superti-Furga G."/>
            <person name="Colinge J."/>
        </authorList>
    </citation>
    <scope>IDENTIFICATION BY MASS SPECTROMETRY [LARGE SCALE ANALYSIS]</scope>
</reference>
<reference key="11">
    <citation type="journal article" date="2013" name="J. Proteome Res.">
        <title>Toward a comprehensive characterization of a human cancer cell phosphoproteome.</title>
        <authorList>
            <person name="Zhou H."/>
            <person name="Di Palma S."/>
            <person name="Preisinger C."/>
            <person name="Peng M."/>
            <person name="Polat A.N."/>
            <person name="Heck A.J."/>
            <person name="Mohammed S."/>
        </authorList>
    </citation>
    <scope>PHOSPHORYLATION [LARGE SCALE ANALYSIS] AT SER-126 AND SER-140</scope>
    <scope>IDENTIFICATION BY MASS SPECTROMETRY [LARGE SCALE ANALYSIS]</scope>
    <source>
        <tissue>Erythroleukemia</tissue>
    </source>
</reference>
<reference key="12">
    <citation type="journal article" date="2014" name="J. Proteomics">
        <title>An enzyme assisted RP-RPLC approach for in-depth analysis of human liver phosphoproteome.</title>
        <authorList>
            <person name="Bian Y."/>
            <person name="Song C."/>
            <person name="Cheng K."/>
            <person name="Dong M."/>
            <person name="Wang F."/>
            <person name="Huang J."/>
            <person name="Sun D."/>
            <person name="Wang L."/>
            <person name="Ye M."/>
            <person name="Zou H."/>
        </authorList>
    </citation>
    <scope>PHOSPHORYLATION [LARGE SCALE ANALYSIS] AT SER-708</scope>
    <scope>IDENTIFICATION BY MASS SPECTROMETRY [LARGE SCALE ANALYSIS]</scope>
    <source>
        <tissue>Liver</tissue>
    </source>
</reference>
<reference key="13">
    <citation type="journal article" date="2015" name="Cell Rep.">
        <title>Mitochondrial RNA granules are centers for post-transcriptional RNA processing and ribosome biogenesis.</title>
        <authorList>
            <person name="Antonicka H."/>
            <person name="Shoubridge E.A."/>
        </authorList>
    </citation>
    <scope>FUNCTION</scope>
    <scope>IDENTIFICATION IN A COMPLEX WITH GRSF1; DDX28; DHX30 AND FASTKD5</scope>
    <scope>SUBCELLULAR LOCATION</scope>
    <scope>RNA-BINDING</scope>
    <scope>IDENTIFICATION BY MASS SPECTROMETRY</scope>
</reference>
<reference key="14">
    <citation type="journal article" date="2015" name="Proteomics">
        <title>N-terminome analysis of the human mitochondrial proteome.</title>
        <authorList>
            <person name="Vaca Jacome A.S."/>
            <person name="Rabilloud T."/>
            <person name="Schaeffer-Reiss C."/>
            <person name="Rompais M."/>
            <person name="Ayoub D."/>
            <person name="Lane L."/>
            <person name="Bairoch A."/>
            <person name="Van Dorsselaer A."/>
            <person name="Carapito C."/>
        </authorList>
    </citation>
    <scope>IDENTIFICATION BY MASS SPECTROMETRY [LARGE SCALE ANALYSIS]</scope>
</reference>
<reference key="15">
    <citation type="journal article" date="2015" name="RNA">
        <title>FASTKD2 is an RNA-binding protein required for mitochondrial RNA processing and translation.</title>
        <authorList>
            <person name="Popow J."/>
            <person name="Alleaume A.-M."/>
            <person name="Curk T."/>
            <person name="Schwarzl T."/>
            <person name="Sauer S."/>
            <person name="Hentze M.W."/>
        </authorList>
    </citation>
    <scope>FUNCTION</scope>
</reference>
<reference key="16">
    <citation type="journal article" date="2016" name="Cell Metab.">
        <title>A Genome-wide CRISPR Death Screen Identifies Genes Essential for Oxidative Phosphorylation.</title>
        <authorList>
            <person name="Arroyo J.D."/>
            <person name="Jourdain A.A."/>
            <person name="Calvo S.E."/>
            <person name="Ballarano C.A."/>
            <person name="Doench J.G."/>
            <person name="Root D.E."/>
            <person name="Mootha V.K."/>
        </authorList>
    </citation>
    <scope>SUBUNIT</scope>
    <scope>FUNCTION</scope>
</reference>
<reference key="17">
    <citation type="journal article" date="2017" name="Mitochondrion">
        <title>Identification of FASTKD2 compound heterozygous mutations as the underlying cause of autosomal recessive MELAS-like syndrome.</title>
        <authorList>
            <person name="Yoo D.H."/>
            <person name="Choi Y.C."/>
            <person name="Nam D.E."/>
            <person name="Choi S.S."/>
            <person name="Kim J.W."/>
            <person name="Choi B.O."/>
            <person name="Chung K.W."/>
        </authorList>
    </citation>
    <scope>VARIANTS COXPD44 205-ARG--GLN-710 DEL AND PRO-255</scope>
</reference>
<reference key="18">
    <citation type="journal article" date="2020" name="Hum. Mutat.">
        <title>Mutations in FASTKD2 are associated with mitochondrial disease with multi-OXPHOS deficiency.</title>
        <authorList>
            <person name="Wei X."/>
            <person name="Du M."/>
            <person name="Li D."/>
            <person name="Wen S."/>
            <person name="Xie J."/>
            <person name="Li Y."/>
            <person name="Chen A."/>
            <person name="Zhang K."/>
            <person name="Xu P."/>
            <person name="Jia M."/>
            <person name="Wen C."/>
            <person name="Zhou H."/>
            <person name="Lyu J."/>
            <person name="Yang Y."/>
            <person name="Fang H."/>
        </authorList>
    </citation>
    <scope>VARIANT COXPD44 290-ARG--GLN-710 DEL</scope>
    <scope>CHARACTERIZATION OF VARIANT COXPD44 290-ARG--GLN-710 DEL</scope>
</reference>
<evidence type="ECO:0000255" key="1">
    <source>
        <dbReference type="PROSITE-ProRule" id="PRU00619"/>
    </source>
</evidence>
<evidence type="ECO:0000269" key="2">
    <source>
    </source>
</evidence>
<evidence type="ECO:0000269" key="3">
    <source>
    </source>
</evidence>
<evidence type="ECO:0000269" key="4">
    <source>
    </source>
</evidence>
<evidence type="ECO:0000269" key="5">
    <source>
    </source>
</evidence>
<evidence type="ECO:0000269" key="6">
    <source>
    </source>
</evidence>
<evidence type="ECO:0000269" key="7">
    <source>
    </source>
</evidence>
<evidence type="ECO:0000269" key="8">
    <source>
    </source>
</evidence>
<evidence type="ECO:0000303" key="9">
    <source>
    </source>
</evidence>
<evidence type="ECO:0000303" key="10">
    <source>
    </source>
</evidence>
<evidence type="ECO:0000305" key="11"/>
<evidence type="ECO:0000305" key="12">
    <source>
    </source>
</evidence>
<evidence type="ECO:0000312" key="13">
    <source>
        <dbReference type="HGNC" id="HGNC:29160"/>
    </source>
</evidence>
<evidence type="ECO:0007744" key="14">
    <source>
    </source>
</evidence>
<evidence type="ECO:0007744" key="15">
    <source>
    </source>
</evidence>
<proteinExistence type="evidence at protein level"/>
<organism>
    <name type="scientific">Homo sapiens</name>
    <name type="common">Human</name>
    <dbReference type="NCBI Taxonomy" id="9606"/>
    <lineage>
        <taxon>Eukaryota</taxon>
        <taxon>Metazoa</taxon>
        <taxon>Chordata</taxon>
        <taxon>Craniata</taxon>
        <taxon>Vertebrata</taxon>
        <taxon>Euteleostomi</taxon>
        <taxon>Mammalia</taxon>
        <taxon>Eutheria</taxon>
        <taxon>Euarchontoglires</taxon>
        <taxon>Primates</taxon>
        <taxon>Haplorrhini</taxon>
        <taxon>Catarrhini</taxon>
        <taxon>Hominidae</taxon>
        <taxon>Homo</taxon>
    </lineage>
</organism>
<feature type="transit peptide" description="Mitochondrion" evidence="11">
    <location>
        <begin position="1"/>
        <end status="unknown"/>
    </location>
</feature>
<feature type="chain" id="PRO_0000050783" description="FAST kinase domain-containing protein 2, mitochondrial">
    <location>
        <begin status="unknown"/>
        <end position="710"/>
    </location>
</feature>
<feature type="domain" description="RAP" evidence="1">
    <location>
        <begin position="634"/>
        <end position="691"/>
    </location>
</feature>
<feature type="modified residue" description="Phosphoserine" evidence="14">
    <location>
        <position position="126"/>
    </location>
</feature>
<feature type="modified residue" description="Phosphoserine" evidence="14">
    <location>
        <position position="140"/>
    </location>
</feature>
<feature type="modified residue" description="Phosphoserine" evidence="15">
    <location>
        <position position="708"/>
    </location>
</feature>
<feature type="splice variant" id="VSP_017186" description="In isoform 2." evidence="9">
    <original>VAVLCVSRSAYCLGS</original>
    <variation>LLTYISFAGLSELKS</variation>
    <location>
        <begin position="634"/>
        <end position="648"/>
    </location>
</feature>
<feature type="splice variant" id="VSP_017187" description="In isoform 2." evidence="9">
    <location>
        <begin position="649"/>
        <end position="710"/>
    </location>
</feature>
<feature type="sequence variant" id="VAR_053889" description="In dbSNP:rs3762568.">
    <original>S</original>
    <variation>N</variation>
    <location>
        <position position="15"/>
    </location>
</feature>
<feature type="sequence variant" id="VAR_084340" description="In COXPD44." evidence="7">
    <location>
        <begin position="205"/>
        <end position="710"/>
    </location>
</feature>
<feature type="sequence variant" id="VAR_084341" description="In COXPD44; uncertain significance." evidence="7">
    <original>L</original>
    <variation>P</variation>
    <location>
        <position position="255"/>
    </location>
</feature>
<feature type="sequence variant" id="VAR_084342" description="In COXPD44; decreased mitochondrial large ribosomal subunit assembly." evidence="8">
    <location>
        <begin position="290"/>
        <end position="710"/>
    </location>
</feature>
<feature type="sequence variant" id="VAR_084343" description="In COXPD44." evidence="2">
    <location>
        <begin position="432"/>
        <end position="710"/>
    </location>
</feature>
<feature type="sequence variant" id="VAR_053890" description="In dbSNP:rs13003768.">
    <original>V</original>
    <variation>E</variation>
    <location>
        <position position="445"/>
    </location>
</feature>
<keyword id="KW-0025">Alternative splicing</keyword>
<keyword id="KW-0225">Disease variant</keyword>
<keyword id="KW-0496">Mitochondrion</keyword>
<keyword id="KW-1135">Mitochondrion nucleoid</keyword>
<keyword id="KW-0597">Phosphoprotein</keyword>
<keyword id="KW-1274">Primary mitochondrial disease</keyword>
<keyword id="KW-1267">Proteomics identification</keyword>
<keyword id="KW-1185">Reference proteome</keyword>
<keyword id="KW-0690">Ribosome biogenesis</keyword>
<keyword id="KW-0694">RNA-binding</keyword>
<keyword id="KW-0699">rRNA-binding</keyword>
<keyword id="KW-0809">Transit peptide</keyword>
<comment type="function">
    <text evidence="2 4 5 6">Plays an important role in assembly of the mitochondrial large ribosomal subunit (PubMed:25683715). As a component of a functional protein-RNA module, consisting of RCC1L, NGRN, RPUSD3, RPUSD4, TRUB2, FASTKD2 and 16S mitochondrial ribosomal RNA (16S mt-rRNA), controls 16S mt-rRNA abundance and is required for intra-mitochondrial translation (PubMed:25683715, PubMed:26370583, PubMed:27667664). May play a role in mitochondrial apoptosis.</text>
</comment>
<comment type="subunit">
    <text evidence="4 6">Monomer. Found in a complex with GRSF1, DDX28, DHX30 and FASTKD5. Associates with the 16S mitochondrial rRNA (16S mt-rRNA) (PubMed:25683715). Forms a regulatory protein-RNA complex, consisting of RCC1L, NGRN, RPUSD3, RPUSD4, TRUB2, FASTKD2 and 16S mt-rRNA (PubMed:27667664).</text>
</comment>
<comment type="interaction">
    <interactant intactId="EBI-1055752">
        <id>Q9NYY8</id>
    </interactant>
    <interactant intactId="EBI-349854">
        <id>P13569</id>
        <label>CFTR</label>
    </interactant>
    <organismsDiffer>false</organismsDiffer>
    <experiments>5</experiments>
</comment>
<comment type="interaction">
    <interactant intactId="EBI-1055752">
        <id>Q9NYY8</id>
    </interactant>
    <interactant intactId="EBI-21591415">
        <id>P13473-2</id>
        <label>LAMP2</label>
    </interactant>
    <organismsDiffer>false</organismsDiffer>
    <experiments>3</experiments>
</comment>
<comment type="interaction">
    <interactant intactId="EBI-1055752">
        <id>Q9NYY8</id>
    </interactant>
    <interactant intactId="EBI-2623095">
        <id>Q9Y371</id>
        <label>SH3GLB1</label>
    </interactant>
    <organismsDiffer>false</organismsDiffer>
    <experiments>3</experiments>
</comment>
<comment type="subcellular location">
    <subcellularLocation>
        <location evidence="3 4">Mitochondrion matrix</location>
        <location evidence="3 4">Mitochondrion nucleoid</location>
    </subcellularLocation>
    <subcellularLocation>
        <location evidence="12">Mitochondrion matrix</location>
    </subcellularLocation>
    <text evidence="4">Localizes to mitochondrial RNA granules found in close proximity to the mitochondrial nucleoids.</text>
</comment>
<comment type="alternative products">
    <event type="alternative splicing"/>
    <isoform>
        <id>Q9NYY8-1</id>
        <name>1</name>
        <sequence type="displayed"/>
    </isoform>
    <isoform>
        <id>Q9NYY8-2</id>
        <name>2</name>
        <sequence type="described" ref="VSP_017186 VSP_017187"/>
    </isoform>
</comment>
<comment type="tissue specificity">
    <text evidence="3">Expression detected in spleen, thymus, testis, ovary, colon, heart, smooth muscle, kidney, brain, lung, liver and white adipose tissue with highest expression in heart, smooth muscle and thyroid.</text>
</comment>
<comment type="disease" evidence="2 7 8">
    <disease id="DI-05822">
        <name>Combined oxidative phosphorylation deficiency 44</name>
        <acronym>COXPD44</acronym>
        <description>An autosomal recessive mitochondrial disorder characterized by onset in infancy or early childhood of global developmental delay, hypotonia, and abnormal movements. Combined oxidative phosphorylation deficiency is present in skeletal muscle. Most patients have seizures associated with status epilepticus. Additional variable features include optic atrophy, hypertrophic cardiomyopathy, stroke-like episodes, and increased lactate levels in serum and cerebrospinal fluid.</description>
        <dbReference type="MIM" id="618855"/>
    </disease>
    <text>The disease is caused by variants affecting the gene represented in this entry.</text>
</comment>
<comment type="similarity">
    <text evidence="11">Belongs to the FAST kinase family.</text>
</comment>
<comment type="caution">
    <text evidence="11">It is uncertain whether Met-1 or Met-17 is the initiator.</text>
</comment>
<comment type="sequence caution" evidence="11">
    <conflict type="erroneous initiation">
        <sequence resource="EMBL-CDS" id="BAA76815"/>
    </conflict>
    <text>Extended N-terminus.</text>
</comment>
<comment type="sequence caution" evidence="11">
    <conflict type="erroneous initiation">
        <sequence resource="EMBL-CDS" id="BAA91617"/>
    </conflict>
    <text>Extended N-terminus.</text>
</comment>
<accession>Q9NYY8</accession>
<accession>Q9NVX6</accession>
<accession>Q9Y2H7</accession>
<gene>
    <name evidence="10 13" type="primary">FASTKD2</name>
    <name type="synonym">KIAA0971</name>
</gene>